<dbReference type="EC" id="7.1.1.-" evidence="1"/>
<dbReference type="EMBL" id="BX842656">
    <property type="protein sequence ID" value="CAE81246.1"/>
    <property type="molecule type" value="Genomic_DNA"/>
</dbReference>
<dbReference type="SMR" id="Q6MGN3"/>
<dbReference type="STRING" id="264462.Bd3891"/>
<dbReference type="KEGG" id="bba:Bd3891"/>
<dbReference type="eggNOG" id="COG1005">
    <property type="taxonomic scope" value="Bacteria"/>
</dbReference>
<dbReference type="HOGENOM" id="CLU_015134_0_1_7"/>
<dbReference type="Proteomes" id="UP000008080">
    <property type="component" value="Chromosome"/>
</dbReference>
<dbReference type="GO" id="GO:0005886">
    <property type="term" value="C:plasma membrane"/>
    <property type="evidence" value="ECO:0007669"/>
    <property type="project" value="UniProtKB-SubCell"/>
</dbReference>
<dbReference type="GO" id="GO:0003954">
    <property type="term" value="F:NADH dehydrogenase activity"/>
    <property type="evidence" value="ECO:0007669"/>
    <property type="project" value="TreeGrafter"/>
</dbReference>
<dbReference type="GO" id="GO:0016655">
    <property type="term" value="F:oxidoreductase activity, acting on NAD(P)H, quinone or similar compound as acceptor"/>
    <property type="evidence" value="ECO:0007669"/>
    <property type="project" value="UniProtKB-UniRule"/>
</dbReference>
<dbReference type="GO" id="GO:0048038">
    <property type="term" value="F:quinone binding"/>
    <property type="evidence" value="ECO:0007669"/>
    <property type="project" value="UniProtKB-KW"/>
</dbReference>
<dbReference type="GO" id="GO:0009060">
    <property type="term" value="P:aerobic respiration"/>
    <property type="evidence" value="ECO:0007669"/>
    <property type="project" value="TreeGrafter"/>
</dbReference>
<dbReference type="HAMAP" id="MF_01350">
    <property type="entry name" value="NDH1_NuoH"/>
    <property type="match status" value="1"/>
</dbReference>
<dbReference type="InterPro" id="IPR001694">
    <property type="entry name" value="NADH_UbQ_OxRdtase_su1/FPO"/>
</dbReference>
<dbReference type="InterPro" id="IPR018086">
    <property type="entry name" value="NADH_UbQ_OxRdtase_su1_CS"/>
</dbReference>
<dbReference type="PANTHER" id="PTHR11432">
    <property type="entry name" value="NADH DEHYDROGENASE SUBUNIT 1"/>
    <property type="match status" value="1"/>
</dbReference>
<dbReference type="PANTHER" id="PTHR11432:SF3">
    <property type="entry name" value="NADH-UBIQUINONE OXIDOREDUCTASE CHAIN 1"/>
    <property type="match status" value="1"/>
</dbReference>
<dbReference type="Pfam" id="PF00146">
    <property type="entry name" value="NADHdh"/>
    <property type="match status" value="1"/>
</dbReference>
<dbReference type="PROSITE" id="PS00668">
    <property type="entry name" value="COMPLEX1_ND1_2"/>
    <property type="match status" value="1"/>
</dbReference>
<sequence length="385" mass="42403">MGMGKDIFEITVNGLKLVVIFLMMVQAVPILVWLERRGSAFIQDRLGPNRVGPLGLVQLLADAVKFLNKENFMPQTAKPFLYYAAPIFALIPGAVAFSAIPLSSPIQVGTFEMFGSTWGPYTFLVQGYDIGVGIVFILGVSSLAAYTLLMAGWGSGNKYTLMGALRASAQTISYELALGLSIVGVIMLYGTFNLTEMTLAQQGPLAFSFLGHTITANWLPNWGIFYQPVGALLFFSAAFAESNRLPFDLAEGESELVGGFHTEYGGFKFNMFFIGEYGHMMIASGLMVLFFFGGYTIPYVSVAELNEWAAGVASTAGKASALVALIHFLVFNIKFGFFMWVFIWVRWTLPRFRYDQLMDLGWKTMLPWALANTIITAFVIYIASL</sequence>
<protein>
    <recommendedName>
        <fullName evidence="1">NADH-quinone oxidoreductase subunit H</fullName>
        <ecNumber evidence="1">7.1.1.-</ecNumber>
    </recommendedName>
    <alternativeName>
        <fullName evidence="1">NADH dehydrogenase I subunit H</fullName>
    </alternativeName>
    <alternativeName>
        <fullName evidence="1">NDH-1 subunit H</fullName>
    </alternativeName>
</protein>
<feature type="chain" id="PRO_0000244894" description="NADH-quinone oxidoreductase subunit H">
    <location>
        <begin position="1"/>
        <end position="385"/>
    </location>
</feature>
<feature type="transmembrane region" description="Helical" evidence="1">
    <location>
        <begin position="14"/>
        <end position="34"/>
    </location>
</feature>
<feature type="transmembrane region" description="Helical" evidence="1">
    <location>
        <begin position="80"/>
        <end position="100"/>
    </location>
</feature>
<feature type="transmembrane region" description="Helical" evidence="1">
    <location>
        <begin position="130"/>
        <end position="150"/>
    </location>
</feature>
<feature type="transmembrane region" description="Helical" evidence="1">
    <location>
        <begin position="172"/>
        <end position="192"/>
    </location>
</feature>
<feature type="transmembrane region" description="Helical" evidence="1">
    <location>
        <begin position="219"/>
        <end position="239"/>
    </location>
</feature>
<feature type="transmembrane region" description="Helical" evidence="1">
    <location>
        <begin position="280"/>
        <end position="300"/>
    </location>
</feature>
<feature type="transmembrane region" description="Helical" evidence="1">
    <location>
        <begin position="325"/>
        <end position="345"/>
    </location>
</feature>
<feature type="transmembrane region" description="Helical" evidence="1">
    <location>
        <begin position="365"/>
        <end position="385"/>
    </location>
</feature>
<evidence type="ECO:0000255" key="1">
    <source>
        <dbReference type="HAMAP-Rule" id="MF_01350"/>
    </source>
</evidence>
<accession>Q6MGN3</accession>
<reference key="1">
    <citation type="journal article" date="2004" name="Science">
        <title>A predator unmasked: life cycle of Bdellovibrio bacteriovorus from a genomic perspective.</title>
        <authorList>
            <person name="Rendulic S."/>
            <person name="Jagtap P."/>
            <person name="Rosinus A."/>
            <person name="Eppinger M."/>
            <person name="Baar C."/>
            <person name="Lanz C."/>
            <person name="Keller H."/>
            <person name="Lambert C."/>
            <person name="Evans K.J."/>
            <person name="Goesmann A."/>
            <person name="Meyer F."/>
            <person name="Sockett R.E."/>
            <person name="Schuster S.C."/>
        </authorList>
    </citation>
    <scope>NUCLEOTIDE SEQUENCE [LARGE SCALE GENOMIC DNA]</scope>
    <source>
        <strain>ATCC 15356 / DSM 50701 / NCIMB 9529 / HD100</strain>
    </source>
</reference>
<name>NUOH_BDEBA</name>
<keyword id="KW-0997">Cell inner membrane</keyword>
<keyword id="KW-1003">Cell membrane</keyword>
<keyword id="KW-0472">Membrane</keyword>
<keyword id="KW-0520">NAD</keyword>
<keyword id="KW-0874">Quinone</keyword>
<keyword id="KW-1185">Reference proteome</keyword>
<keyword id="KW-1278">Translocase</keyword>
<keyword id="KW-0812">Transmembrane</keyword>
<keyword id="KW-1133">Transmembrane helix</keyword>
<keyword id="KW-0830">Ubiquinone</keyword>
<comment type="function">
    <text evidence="1">NDH-1 shuttles electrons from NADH, via FMN and iron-sulfur (Fe-S) centers, to quinones in the respiratory chain. The immediate electron acceptor for the enzyme in this species is believed to be ubiquinone. Couples the redox reaction to proton translocation (for every two electrons transferred, four hydrogen ions are translocated across the cytoplasmic membrane), and thus conserves the redox energy in a proton gradient. This subunit may bind ubiquinone.</text>
</comment>
<comment type="catalytic activity">
    <reaction evidence="1">
        <text>a quinone + NADH + 5 H(+)(in) = a quinol + NAD(+) + 4 H(+)(out)</text>
        <dbReference type="Rhea" id="RHEA:57888"/>
        <dbReference type="ChEBI" id="CHEBI:15378"/>
        <dbReference type="ChEBI" id="CHEBI:24646"/>
        <dbReference type="ChEBI" id="CHEBI:57540"/>
        <dbReference type="ChEBI" id="CHEBI:57945"/>
        <dbReference type="ChEBI" id="CHEBI:132124"/>
    </reaction>
</comment>
<comment type="subunit">
    <text evidence="1">NDH-1 is composed of 14 different subunits. Subunits NuoA, H, J, K, L, M, N constitute the membrane sector of the complex.</text>
</comment>
<comment type="subcellular location">
    <subcellularLocation>
        <location evidence="1">Cell inner membrane</location>
        <topology evidence="1">Multi-pass membrane protein</topology>
    </subcellularLocation>
</comment>
<comment type="similarity">
    <text evidence="1">Belongs to the complex I subunit 1 family.</text>
</comment>
<gene>
    <name evidence="1" type="primary">nuoH</name>
    <name type="ordered locus">Bd3891</name>
</gene>
<organism>
    <name type="scientific">Bdellovibrio bacteriovorus (strain ATCC 15356 / DSM 50701 / NCIMB 9529 / HD100)</name>
    <dbReference type="NCBI Taxonomy" id="264462"/>
    <lineage>
        <taxon>Bacteria</taxon>
        <taxon>Pseudomonadati</taxon>
        <taxon>Bdellovibrionota</taxon>
        <taxon>Bdellovibrionia</taxon>
        <taxon>Bdellovibrionales</taxon>
        <taxon>Pseudobdellovibrionaceae</taxon>
        <taxon>Bdellovibrio</taxon>
    </lineage>
</organism>
<proteinExistence type="inferred from homology"/>